<geneLocation type="chloroplast"/>
<organism>
    <name type="scientific">Zygnema circumcarinatum</name>
    <name type="common">Green alga</name>
    <dbReference type="NCBI Taxonomy" id="35869"/>
    <lineage>
        <taxon>Eukaryota</taxon>
        <taxon>Viridiplantae</taxon>
        <taxon>Streptophyta</taxon>
        <taxon>Zygnematophyceae</taxon>
        <taxon>Zygnematophycidae</taxon>
        <taxon>Zygnematales</taxon>
        <taxon>Zygnemataceae</taxon>
        <taxon>Zygnema</taxon>
    </lineage>
</organism>
<name>PSBD_ZYGCR</name>
<gene>
    <name evidence="2" type="primary">psbD</name>
</gene>
<proteinExistence type="inferred from homology"/>
<protein>
    <recommendedName>
        <fullName evidence="2">Photosystem II D2 protein</fullName>
        <shortName evidence="2">PSII D2 protein</shortName>
        <ecNumber evidence="2">1.10.3.9</ecNumber>
    </recommendedName>
    <alternativeName>
        <fullName evidence="2">Photosystem Q(A) protein</fullName>
    </alternativeName>
</protein>
<accession>Q32RM5</accession>
<sequence>MTIAIGKSSEQPKGLFDSMDDWLRRDRFVFVGWSGLLLFPCAYFALGGWLTGTTFVTSWYTHGLASSYLEGCNFLTAAVSTPANSLSHSLLLLWGPEAQGDFTRWCQLGGLWTFVALHGAFGLIGFMLRQFELARSVQLRPYNALAFSGPIAVFVSVFLIYPLGQSGWFFAPSFGVAAIFRFILFFQGFHNWTLNPFHMMGVAGVLGAALLCAIHGATVENTLFEDGDGANTFRAFNPTQAEETYSMVTANRFWSQIFGVAFSNKRWLHFFMLFVPVTGLWMSAIGVVGLALNLRAYDFVSQEIRAAEDPEFETFYTKNILLNEGIRAWMAAQDQPHENLVFPEEVLPRGNAL</sequence>
<feature type="initiator methionine" description="Removed" evidence="1">
    <location>
        <position position="1"/>
    </location>
</feature>
<feature type="chain" id="PRO_0000359701" description="Photosystem II D2 protein">
    <location>
        <begin position="2"/>
        <end position="353"/>
    </location>
</feature>
<feature type="transmembrane region" description="Helical" evidence="2">
    <location>
        <begin position="41"/>
        <end position="61"/>
    </location>
</feature>
<feature type="transmembrane region" description="Helical" evidence="2">
    <location>
        <begin position="125"/>
        <end position="141"/>
    </location>
</feature>
<feature type="transmembrane region" description="Helical" evidence="2">
    <location>
        <begin position="153"/>
        <end position="166"/>
    </location>
</feature>
<feature type="transmembrane region" description="Helical" evidence="2">
    <location>
        <begin position="208"/>
        <end position="228"/>
    </location>
</feature>
<feature type="transmembrane region" description="Helical" evidence="2">
    <location>
        <begin position="279"/>
        <end position="295"/>
    </location>
</feature>
<feature type="binding site" description="axial binding residue" evidence="2">
    <location>
        <position position="118"/>
    </location>
    <ligand>
        <name>chlorophyll a</name>
        <dbReference type="ChEBI" id="CHEBI:58416"/>
        <label>ChlzD2</label>
    </ligand>
    <ligandPart>
        <name>Mg</name>
        <dbReference type="ChEBI" id="CHEBI:25107"/>
    </ligandPart>
</feature>
<feature type="binding site" evidence="2">
    <location>
        <position position="130"/>
    </location>
    <ligand>
        <name>pheophytin a</name>
        <dbReference type="ChEBI" id="CHEBI:136840"/>
        <label>D2</label>
    </ligand>
</feature>
<feature type="binding site" evidence="2">
    <location>
        <position position="143"/>
    </location>
    <ligand>
        <name>pheophytin a</name>
        <dbReference type="ChEBI" id="CHEBI:136840"/>
        <label>D2</label>
    </ligand>
</feature>
<feature type="binding site" description="axial binding residue" evidence="2">
    <location>
        <position position="198"/>
    </location>
    <ligand>
        <name>chlorophyll a</name>
        <dbReference type="ChEBI" id="CHEBI:58416"/>
        <label>PD2</label>
    </ligand>
    <ligandPart>
        <name>Mg</name>
        <dbReference type="ChEBI" id="CHEBI:25107"/>
    </ligandPart>
</feature>
<feature type="binding site" evidence="2">
    <location>
        <position position="215"/>
    </location>
    <ligand>
        <name>a plastoquinone</name>
        <dbReference type="ChEBI" id="CHEBI:17757"/>
        <label>Q(A)</label>
    </ligand>
</feature>
<feature type="binding site" evidence="2">
    <location>
        <position position="215"/>
    </location>
    <ligand>
        <name>Fe cation</name>
        <dbReference type="ChEBI" id="CHEBI:24875"/>
        <note>ligand shared with heterodimeric partner</note>
    </ligand>
</feature>
<feature type="binding site" evidence="2">
    <location>
        <position position="262"/>
    </location>
    <ligand>
        <name>a plastoquinone</name>
        <dbReference type="ChEBI" id="CHEBI:17757"/>
        <label>Q(A)</label>
    </ligand>
</feature>
<feature type="binding site" evidence="2">
    <location>
        <position position="269"/>
    </location>
    <ligand>
        <name>Fe cation</name>
        <dbReference type="ChEBI" id="CHEBI:24875"/>
        <note>ligand shared with heterodimeric partner</note>
    </ligand>
</feature>
<feature type="modified residue" description="N-acetylthreonine" evidence="1">
    <location>
        <position position="2"/>
    </location>
</feature>
<feature type="modified residue" description="Phosphothreonine" evidence="1">
    <location>
        <position position="2"/>
    </location>
</feature>
<evidence type="ECO:0000250" key="1">
    <source>
        <dbReference type="UniProtKB" id="P56761"/>
    </source>
</evidence>
<evidence type="ECO:0000255" key="2">
    <source>
        <dbReference type="HAMAP-Rule" id="MF_01383"/>
    </source>
</evidence>
<dbReference type="EC" id="1.10.3.9" evidence="2"/>
<dbReference type="EMBL" id="AY958086">
    <property type="protein sequence ID" value="AAX45839.1"/>
    <property type="molecule type" value="Genomic_DNA"/>
</dbReference>
<dbReference type="RefSeq" id="YP_636501.1">
    <property type="nucleotide sequence ID" value="NC_008117.1"/>
</dbReference>
<dbReference type="SMR" id="Q32RM5"/>
<dbReference type="GeneID" id="4108159"/>
<dbReference type="GO" id="GO:0009535">
    <property type="term" value="C:chloroplast thylakoid membrane"/>
    <property type="evidence" value="ECO:0007669"/>
    <property type="project" value="UniProtKB-SubCell"/>
</dbReference>
<dbReference type="GO" id="GO:0009523">
    <property type="term" value="C:photosystem II"/>
    <property type="evidence" value="ECO:0007669"/>
    <property type="project" value="UniProtKB-KW"/>
</dbReference>
<dbReference type="GO" id="GO:0016168">
    <property type="term" value="F:chlorophyll binding"/>
    <property type="evidence" value="ECO:0007669"/>
    <property type="project" value="UniProtKB-UniRule"/>
</dbReference>
<dbReference type="GO" id="GO:0045156">
    <property type="term" value="F:electron transporter, transferring electrons within the cyclic electron transport pathway of photosynthesis activity"/>
    <property type="evidence" value="ECO:0007669"/>
    <property type="project" value="InterPro"/>
</dbReference>
<dbReference type="GO" id="GO:0005506">
    <property type="term" value="F:iron ion binding"/>
    <property type="evidence" value="ECO:0007669"/>
    <property type="project" value="UniProtKB-UniRule"/>
</dbReference>
<dbReference type="GO" id="GO:0010242">
    <property type="term" value="F:oxygen evolving activity"/>
    <property type="evidence" value="ECO:0007669"/>
    <property type="project" value="UniProtKB-EC"/>
</dbReference>
<dbReference type="GO" id="GO:0009772">
    <property type="term" value="P:photosynthetic electron transport in photosystem II"/>
    <property type="evidence" value="ECO:0007669"/>
    <property type="project" value="InterPro"/>
</dbReference>
<dbReference type="CDD" id="cd09288">
    <property type="entry name" value="Photosystem-II_D2"/>
    <property type="match status" value="1"/>
</dbReference>
<dbReference type="FunFam" id="1.20.85.10:FF:000001">
    <property type="entry name" value="photosystem II D2 protein-like"/>
    <property type="match status" value="1"/>
</dbReference>
<dbReference type="Gene3D" id="1.20.85.10">
    <property type="entry name" value="Photosystem II protein D1-like"/>
    <property type="match status" value="1"/>
</dbReference>
<dbReference type="HAMAP" id="MF_01383">
    <property type="entry name" value="PSII_PsbD_D2"/>
    <property type="match status" value="1"/>
</dbReference>
<dbReference type="InterPro" id="IPR055266">
    <property type="entry name" value="D1/D2"/>
</dbReference>
<dbReference type="InterPro" id="IPR036854">
    <property type="entry name" value="Photo_II_D1/D2_sf"/>
</dbReference>
<dbReference type="InterPro" id="IPR000484">
    <property type="entry name" value="Photo_RC_L/M"/>
</dbReference>
<dbReference type="InterPro" id="IPR055265">
    <property type="entry name" value="Photo_RC_L/M_CS"/>
</dbReference>
<dbReference type="InterPro" id="IPR005868">
    <property type="entry name" value="PSII_PsbD/D2"/>
</dbReference>
<dbReference type="NCBIfam" id="TIGR01152">
    <property type="entry name" value="psbD"/>
    <property type="match status" value="1"/>
</dbReference>
<dbReference type="PANTHER" id="PTHR33149:SF12">
    <property type="entry name" value="PHOTOSYSTEM II D2 PROTEIN"/>
    <property type="match status" value="1"/>
</dbReference>
<dbReference type="PANTHER" id="PTHR33149">
    <property type="entry name" value="PHOTOSYSTEM II PROTEIN D1"/>
    <property type="match status" value="1"/>
</dbReference>
<dbReference type="Pfam" id="PF00124">
    <property type="entry name" value="Photo_RC"/>
    <property type="match status" value="1"/>
</dbReference>
<dbReference type="PRINTS" id="PR00256">
    <property type="entry name" value="REACTNCENTRE"/>
</dbReference>
<dbReference type="SUPFAM" id="SSF81483">
    <property type="entry name" value="Bacterial photosystem II reaction centre, L and M subunits"/>
    <property type="match status" value="1"/>
</dbReference>
<dbReference type="PROSITE" id="PS00244">
    <property type="entry name" value="REACTION_CENTER"/>
    <property type="match status" value="1"/>
</dbReference>
<reference key="1">
    <citation type="journal article" date="2005" name="BMC Biol.">
        <title>The complete chloroplast DNA sequences of the charophycean green algae Staurastrum and Zygnema reveal that the chloroplast genome underwent extensive changes during the evolution of the Zygnematales.</title>
        <authorList>
            <person name="Turmel M."/>
            <person name="Otis C."/>
            <person name="Lemieux C."/>
        </authorList>
    </citation>
    <scope>NUCLEOTIDE SEQUENCE [LARGE SCALE GENOMIC DNA]</scope>
</reference>
<keyword id="KW-0007">Acetylation</keyword>
<keyword id="KW-0148">Chlorophyll</keyword>
<keyword id="KW-0150">Chloroplast</keyword>
<keyword id="KW-0157">Chromophore</keyword>
<keyword id="KW-0249">Electron transport</keyword>
<keyword id="KW-0408">Iron</keyword>
<keyword id="KW-0460">Magnesium</keyword>
<keyword id="KW-0472">Membrane</keyword>
<keyword id="KW-0479">Metal-binding</keyword>
<keyword id="KW-0560">Oxidoreductase</keyword>
<keyword id="KW-0597">Phosphoprotein</keyword>
<keyword id="KW-0602">Photosynthesis</keyword>
<keyword id="KW-0604">Photosystem II</keyword>
<keyword id="KW-0934">Plastid</keyword>
<keyword id="KW-0793">Thylakoid</keyword>
<keyword id="KW-0812">Transmembrane</keyword>
<keyword id="KW-1133">Transmembrane helix</keyword>
<keyword id="KW-0813">Transport</keyword>
<comment type="function">
    <text evidence="2">Photosystem II (PSII) is a light-driven water:plastoquinone oxidoreductase that uses light energy to abstract electrons from H(2)O, generating O(2) and a proton gradient subsequently used for ATP formation. It consists of a core antenna complex that captures photons, and an electron transfer chain that converts photonic excitation into a charge separation. The D1/D2 (PsbA/PsbD) reaction center heterodimer binds P680, the primary electron donor of PSII as well as several subsequent electron acceptors. D2 is needed for assembly of a stable PSII complex.</text>
</comment>
<comment type="catalytic activity">
    <reaction evidence="2">
        <text>2 a plastoquinone + 4 hnu + 2 H2O = 2 a plastoquinol + O2</text>
        <dbReference type="Rhea" id="RHEA:36359"/>
        <dbReference type="Rhea" id="RHEA-COMP:9561"/>
        <dbReference type="Rhea" id="RHEA-COMP:9562"/>
        <dbReference type="ChEBI" id="CHEBI:15377"/>
        <dbReference type="ChEBI" id="CHEBI:15379"/>
        <dbReference type="ChEBI" id="CHEBI:17757"/>
        <dbReference type="ChEBI" id="CHEBI:30212"/>
        <dbReference type="ChEBI" id="CHEBI:62192"/>
        <dbReference type="EC" id="1.10.3.9"/>
    </reaction>
</comment>
<comment type="cofactor">
    <text evidence="2">The D1/D2 heterodimer binds P680, chlorophylls that are the primary electron donor of PSII, and subsequent electron acceptors. It shares a non-heme iron and each subunit binds pheophytin, quinone, additional chlorophylls, carotenoids and lipids. There is also a Cl(-1) ion associated with D1 and D2, which is required for oxygen evolution. The PSII complex binds additional chlorophylls, carotenoids and specific lipids.</text>
</comment>
<comment type="subunit">
    <text evidence="2">PSII is composed of 1 copy each of membrane proteins PsbA, PsbB, PsbC, PsbD, PsbE, PsbF, PsbH, PsbI, PsbJ, PsbK, PsbL, PsbM, PsbT, PsbX, PsbY, PsbZ, Psb30/Ycf12, at least 3 peripheral proteins of the oxygen-evolving complex and a large number of cofactors. It forms dimeric complexes.</text>
</comment>
<comment type="subcellular location">
    <subcellularLocation>
        <location evidence="2">Plastid</location>
        <location evidence="2">Chloroplast thylakoid membrane</location>
        <topology evidence="2">Multi-pass membrane protein</topology>
    </subcellularLocation>
</comment>
<comment type="miscellaneous">
    <text evidence="2">2 of the reaction center chlorophylls (ChlD1 and ChlD2) are entirely coordinated by water.</text>
</comment>
<comment type="similarity">
    <text evidence="2">Belongs to the reaction center PufL/M/PsbA/D family.</text>
</comment>